<sequence length="365" mass="41491">MNILKISKQTLRNNIKIIREYIGNAKMCFPVKANAYGHGIEDIVENTHDLVDFFAVANSLEAFRVTAVAKNPVLVFGVIYYEYIEKMISENIRVSIQDYEDIEKLEQIAKELDKKVYAHININTGMNRMGVDYNDACRTIQRAYESDWLILEGVYSHLACADNRDHPTNIKQKNRFDSIVKFTKGLSQDIICHLSNSYGFLGQKGICYDMVRPGILSYGFLPEFYVDRVIREIKPIARLLSKVVKIITLQEGEGVGYSLIYRGFEDEQLAVIPIGYGDGFPRELGDRGFVNINDVMYPMAGRMSMDGLTVSLGINEYDVKVGDTVELISAIPRNRNSAFSIAKQTNTIEYDIMSTLNDRIIRKII</sequence>
<dbReference type="EC" id="5.1.1.1" evidence="1"/>
<dbReference type="EMBL" id="AJ749949">
    <property type="protein sequence ID" value="CAG45206.1"/>
    <property type="molecule type" value="Genomic_DNA"/>
</dbReference>
<dbReference type="RefSeq" id="WP_003029065.1">
    <property type="nucleotide sequence ID" value="NC_006570.2"/>
</dbReference>
<dbReference type="RefSeq" id="YP_169598.1">
    <property type="nucleotide sequence ID" value="NC_006570.2"/>
</dbReference>
<dbReference type="SMR" id="Q5NH94"/>
<dbReference type="IntAct" id="Q5NH94">
    <property type="interactions" value="2"/>
</dbReference>
<dbReference type="STRING" id="177416.FTT_0573"/>
<dbReference type="DNASU" id="3192353"/>
<dbReference type="EnsemblBacteria" id="CAG45206">
    <property type="protein sequence ID" value="CAG45206"/>
    <property type="gene ID" value="FTT_0573"/>
</dbReference>
<dbReference type="KEGG" id="ftu:FTT_0573"/>
<dbReference type="eggNOG" id="COG0787">
    <property type="taxonomic scope" value="Bacteria"/>
</dbReference>
<dbReference type="OrthoDB" id="9813814at2"/>
<dbReference type="UniPathway" id="UPA00042">
    <property type="reaction ID" value="UER00497"/>
</dbReference>
<dbReference type="Proteomes" id="UP000001174">
    <property type="component" value="Chromosome"/>
</dbReference>
<dbReference type="GO" id="GO:0005829">
    <property type="term" value="C:cytosol"/>
    <property type="evidence" value="ECO:0007669"/>
    <property type="project" value="TreeGrafter"/>
</dbReference>
<dbReference type="GO" id="GO:0008784">
    <property type="term" value="F:alanine racemase activity"/>
    <property type="evidence" value="ECO:0007669"/>
    <property type="project" value="UniProtKB-UniRule"/>
</dbReference>
<dbReference type="GO" id="GO:0030170">
    <property type="term" value="F:pyridoxal phosphate binding"/>
    <property type="evidence" value="ECO:0007669"/>
    <property type="project" value="UniProtKB-UniRule"/>
</dbReference>
<dbReference type="GO" id="GO:0030632">
    <property type="term" value="P:D-alanine biosynthetic process"/>
    <property type="evidence" value="ECO:0007669"/>
    <property type="project" value="UniProtKB-UniRule"/>
</dbReference>
<dbReference type="CDD" id="cd00430">
    <property type="entry name" value="PLPDE_III_AR"/>
    <property type="match status" value="1"/>
</dbReference>
<dbReference type="FunFam" id="3.20.20.10:FF:000002">
    <property type="entry name" value="Alanine racemase"/>
    <property type="match status" value="1"/>
</dbReference>
<dbReference type="Gene3D" id="3.20.20.10">
    <property type="entry name" value="Alanine racemase"/>
    <property type="match status" value="1"/>
</dbReference>
<dbReference type="Gene3D" id="2.40.37.10">
    <property type="entry name" value="Lyase, Ornithine Decarboxylase, Chain A, domain 1"/>
    <property type="match status" value="1"/>
</dbReference>
<dbReference type="HAMAP" id="MF_01201">
    <property type="entry name" value="Ala_racemase"/>
    <property type="match status" value="1"/>
</dbReference>
<dbReference type="InterPro" id="IPR000821">
    <property type="entry name" value="Ala_racemase"/>
</dbReference>
<dbReference type="InterPro" id="IPR009006">
    <property type="entry name" value="Ala_racemase/Decarboxylase_C"/>
</dbReference>
<dbReference type="InterPro" id="IPR011079">
    <property type="entry name" value="Ala_racemase_C"/>
</dbReference>
<dbReference type="InterPro" id="IPR001608">
    <property type="entry name" value="Ala_racemase_N"/>
</dbReference>
<dbReference type="InterPro" id="IPR029066">
    <property type="entry name" value="PLP-binding_barrel"/>
</dbReference>
<dbReference type="NCBIfam" id="TIGR00492">
    <property type="entry name" value="alr"/>
    <property type="match status" value="1"/>
</dbReference>
<dbReference type="PANTHER" id="PTHR30511">
    <property type="entry name" value="ALANINE RACEMASE"/>
    <property type="match status" value="1"/>
</dbReference>
<dbReference type="PANTHER" id="PTHR30511:SF0">
    <property type="entry name" value="ALANINE RACEMASE, CATABOLIC-RELATED"/>
    <property type="match status" value="1"/>
</dbReference>
<dbReference type="Pfam" id="PF00842">
    <property type="entry name" value="Ala_racemase_C"/>
    <property type="match status" value="1"/>
</dbReference>
<dbReference type="Pfam" id="PF01168">
    <property type="entry name" value="Ala_racemase_N"/>
    <property type="match status" value="1"/>
</dbReference>
<dbReference type="PRINTS" id="PR00992">
    <property type="entry name" value="ALARACEMASE"/>
</dbReference>
<dbReference type="SMART" id="SM01005">
    <property type="entry name" value="Ala_racemase_C"/>
    <property type="match status" value="1"/>
</dbReference>
<dbReference type="SUPFAM" id="SSF50621">
    <property type="entry name" value="Alanine racemase C-terminal domain-like"/>
    <property type="match status" value="1"/>
</dbReference>
<dbReference type="SUPFAM" id="SSF51419">
    <property type="entry name" value="PLP-binding barrel"/>
    <property type="match status" value="1"/>
</dbReference>
<comment type="function">
    <text evidence="1">Catalyzes the interconversion of L-alanine and D-alanine. May also act on other amino acids.</text>
</comment>
<comment type="catalytic activity">
    <reaction evidence="1">
        <text>L-alanine = D-alanine</text>
        <dbReference type="Rhea" id="RHEA:20249"/>
        <dbReference type="ChEBI" id="CHEBI:57416"/>
        <dbReference type="ChEBI" id="CHEBI:57972"/>
        <dbReference type="EC" id="5.1.1.1"/>
    </reaction>
</comment>
<comment type="cofactor">
    <cofactor evidence="1">
        <name>pyridoxal 5'-phosphate</name>
        <dbReference type="ChEBI" id="CHEBI:597326"/>
    </cofactor>
</comment>
<comment type="pathway">
    <text evidence="1">Amino-acid biosynthesis; D-alanine biosynthesis; D-alanine from L-alanine: step 1/1.</text>
</comment>
<comment type="similarity">
    <text evidence="1">Belongs to the alanine racemase family.</text>
</comment>
<feature type="chain" id="PRO_1000073096" description="Alanine racemase">
    <location>
        <begin position="1"/>
        <end position="365"/>
    </location>
</feature>
<feature type="active site" description="Proton acceptor; specific for D-alanine" evidence="1">
    <location>
        <position position="32"/>
    </location>
</feature>
<feature type="active site" description="Proton acceptor; specific for L-alanine" evidence="1">
    <location>
        <position position="257"/>
    </location>
</feature>
<feature type="binding site" evidence="1">
    <location>
        <position position="128"/>
    </location>
    <ligand>
        <name>substrate</name>
    </ligand>
</feature>
<feature type="binding site" evidence="1">
    <location>
        <position position="305"/>
    </location>
    <ligand>
        <name>substrate</name>
    </ligand>
</feature>
<feature type="modified residue" description="N6-(pyridoxal phosphate)lysine" evidence="1">
    <location>
        <position position="32"/>
    </location>
</feature>
<gene>
    <name type="primary">alr</name>
    <name type="ordered locus">FTT_0573</name>
</gene>
<accession>Q5NH94</accession>
<name>ALR_FRATT</name>
<reference key="1">
    <citation type="journal article" date="2005" name="Nat. Genet.">
        <title>The complete genome sequence of Francisella tularensis, the causative agent of tularemia.</title>
        <authorList>
            <person name="Larsson P."/>
            <person name="Oyston P.C.F."/>
            <person name="Chain P."/>
            <person name="Chu M.C."/>
            <person name="Duffield M."/>
            <person name="Fuxelius H.-H."/>
            <person name="Garcia E."/>
            <person name="Haelltorp G."/>
            <person name="Johansson D."/>
            <person name="Isherwood K.E."/>
            <person name="Karp P.D."/>
            <person name="Larsson E."/>
            <person name="Liu Y."/>
            <person name="Michell S."/>
            <person name="Prior J."/>
            <person name="Prior R."/>
            <person name="Malfatti S."/>
            <person name="Sjoestedt A."/>
            <person name="Svensson K."/>
            <person name="Thompson N."/>
            <person name="Vergez L."/>
            <person name="Wagg J.K."/>
            <person name="Wren B.W."/>
            <person name="Lindler L.E."/>
            <person name="Andersson S.G.E."/>
            <person name="Forsman M."/>
            <person name="Titball R.W."/>
        </authorList>
    </citation>
    <scope>NUCLEOTIDE SEQUENCE [LARGE SCALE GENOMIC DNA]</scope>
    <source>
        <strain>SCHU S4 / Schu 4</strain>
    </source>
</reference>
<keyword id="KW-0413">Isomerase</keyword>
<keyword id="KW-0663">Pyridoxal phosphate</keyword>
<keyword id="KW-1185">Reference proteome</keyword>
<evidence type="ECO:0000255" key="1">
    <source>
        <dbReference type="HAMAP-Rule" id="MF_01201"/>
    </source>
</evidence>
<proteinExistence type="inferred from homology"/>
<organism>
    <name type="scientific">Francisella tularensis subsp. tularensis (strain SCHU S4 / Schu 4)</name>
    <dbReference type="NCBI Taxonomy" id="177416"/>
    <lineage>
        <taxon>Bacteria</taxon>
        <taxon>Pseudomonadati</taxon>
        <taxon>Pseudomonadota</taxon>
        <taxon>Gammaproteobacteria</taxon>
        <taxon>Thiotrichales</taxon>
        <taxon>Francisellaceae</taxon>
        <taxon>Francisella</taxon>
    </lineage>
</organism>
<protein>
    <recommendedName>
        <fullName evidence="1">Alanine racemase</fullName>
        <ecNumber evidence="1">5.1.1.1</ecNumber>
    </recommendedName>
</protein>